<feature type="chain" id="PRO_0000348024" description="tRNA 5-methylaminomethyl-2-thiouridine biosynthesis bifunctional protein MnmC">
    <location>
        <begin position="1"/>
        <end position="685"/>
    </location>
</feature>
<feature type="region of interest" description="tRNA (mnm(5)s(2)U34)-methyltransferase">
    <location>
        <begin position="1"/>
        <end position="272"/>
    </location>
</feature>
<feature type="region of interest" description="FAD-dependent cmnm(5)s(2)U34 oxidoreductase">
    <location>
        <begin position="278"/>
        <end position="685"/>
    </location>
</feature>
<sequence>MTAEPNKPCQIKRDYPQLINLYPATADTDAHYLSKLSIYQQRVFEAHSQQKLLVLGQIGLSNGLELLSWWRAHSHLSQRLLLKVFEPNPINAYELKLLWDQSACLTKEPELEPLAQRLLHAEPAAIIGCQRLIFDDGRFTIDLHFGDIQSQLSSLIHSPMHPVQHWLILPHLLQALHHQSHWQMAKLSDDSATIATIGLSESSGLSETTVNRFQACGFTVSDINELGIHQPVTLINHQPDAVLLHERQVLRQQDAKAYAFNPMAAILSSATQSSIAIIGGGLASAHLALSLAERGQGAQVFCKDAELGQGASGNRQGAIYPLLTPENDELSRFFQQAFLFSRRRVQALTSAPADNQTPISHVFCGVLQTAHDERSQLRLDKIIQGQPWPSEIAYAVDAEQANAIAKINLDKPGFFYPLGGWVCPFEYADAAIQKAMQLADVSVSLNTDILAIERQSDGWVLLTEKERLGPFAQLVLANGAELTQFDASNKLQISPFRGQVSHVPAQFQLSQLATVLCANGYLTPSHQGLHCLGASYVKEPKHLDFCPQEQQENLAKMHESYPKQSWLEDIDMSGNNARVGVRMVTRDHFPMMGCAPDVPKIIKDYAQHQLTKESRHYWQTTPAPVHQGLYILGGLGSRGLSSGPLAAECLAAQLCGEPIPLDKATLCKLNPNRMWLRKLLKGKAL</sequence>
<comment type="function">
    <text evidence="1">Catalyzes the last two steps in the biosynthesis of 5-methylaminomethyl-2-thiouridine (mnm(5)s(2)U) at the wobble position (U34) in tRNA. Catalyzes the FAD-dependent demodification of cmnm(5)s(2)U34 to nm(5)s(2)U34, followed by the transfer of a methyl group from S-adenosyl-L-methionine to nm(5)s(2)U34, to form mnm(5)s(2)U34.</text>
</comment>
<comment type="catalytic activity">
    <reaction evidence="1">
        <text>5-aminomethyl-2-thiouridine(34) in tRNA + S-adenosyl-L-methionine = 5-methylaminomethyl-2-thiouridine(34) in tRNA + S-adenosyl-L-homocysteine + H(+)</text>
        <dbReference type="Rhea" id="RHEA:19569"/>
        <dbReference type="Rhea" id="RHEA-COMP:10195"/>
        <dbReference type="Rhea" id="RHEA-COMP:10197"/>
        <dbReference type="ChEBI" id="CHEBI:15378"/>
        <dbReference type="ChEBI" id="CHEBI:57856"/>
        <dbReference type="ChEBI" id="CHEBI:59789"/>
        <dbReference type="ChEBI" id="CHEBI:74454"/>
        <dbReference type="ChEBI" id="CHEBI:74455"/>
        <dbReference type="EC" id="2.1.1.61"/>
    </reaction>
</comment>
<comment type="cofactor">
    <cofactor evidence="1">
        <name>FAD</name>
        <dbReference type="ChEBI" id="CHEBI:57692"/>
    </cofactor>
</comment>
<comment type="subcellular location">
    <subcellularLocation>
        <location evidence="1">Cytoplasm</location>
    </subcellularLocation>
</comment>
<comment type="similarity">
    <text evidence="1">In the N-terminal section; belongs to the methyltransferase superfamily. tRNA (mnm(5)s(2)U34)-methyltransferase family.</text>
</comment>
<comment type="similarity">
    <text evidence="1">In the C-terminal section; belongs to the DAO family.</text>
</comment>
<accession>A6WQ09</accession>
<gene>
    <name evidence="1" type="primary">mnmC</name>
    <name type="ordered locus">Shew185_2764</name>
</gene>
<reference key="1">
    <citation type="submission" date="2007-07" db="EMBL/GenBank/DDBJ databases">
        <title>Complete sequence of chromosome of Shewanella baltica OS185.</title>
        <authorList>
            <consortium name="US DOE Joint Genome Institute"/>
            <person name="Copeland A."/>
            <person name="Lucas S."/>
            <person name="Lapidus A."/>
            <person name="Barry K."/>
            <person name="Glavina del Rio T."/>
            <person name="Dalin E."/>
            <person name="Tice H."/>
            <person name="Pitluck S."/>
            <person name="Sims D."/>
            <person name="Brettin T."/>
            <person name="Bruce D."/>
            <person name="Detter J.C."/>
            <person name="Han C."/>
            <person name="Schmutz J."/>
            <person name="Larimer F."/>
            <person name="Land M."/>
            <person name="Hauser L."/>
            <person name="Kyrpides N."/>
            <person name="Mikhailova N."/>
            <person name="Brettar I."/>
            <person name="Rodrigues J."/>
            <person name="Konstantinidis K."/>
            <person name="Tiedje J."/>
            <person name="Richardson P."/>
        </authorList>
    </citation>
    <scope>NUCLEOTIDE SEQUENCE [LARGE SCALE GENOMIC DNA]</scope>
    <source>
        <strain>OS185</strain>
    </source>
</reference>
<evidence type="ECO:0000255" key="1">
    <source>
        <dbReference type="HAMAP-Rule" id="MF_01102"/>
    </source>
</evidence>
<organism>
    <name type="scientific">Shewanella baltica (strain OS185)</name>
    <dbReference type="NCBI Taxonomy" id="402882"/>
    <lineage>
        <taxon>Bacteria</taxon>
        <taxon>Pseudomonadati</taxon>
        <taxon>Pseudomonadota</taxon>
        <taxon>Gammaproteobacteria</taxon>
        <taxon>Alteromonadales</taxon>
        <taxon>Shewanellaceae</taxon>
        <taxon>Shewanella</taxon>
    </lineage>
</organism>
<proteinExistence type="inferred from homology"/>
<name>MNMC_SHEB8</name>
<dbReference type="EC" id="2.1.1.61" evidence="1"/>
<dbReference type="EC" id="1.5.-.-" evidence="1"/>
<dbReference type="EMBL" id="CP000753">
    <property type="protein sequence ID" value="ABS08898.1"/>
    <property type="molecule type" value="Genomic_DNA"/>
</dbReference>
<dbReference type="RefSeq" id="WP_012089590.1">
    <property type="nucleotide sequence ID" value="NC_009665.1"/>
</dbReference>
<dbReference type="SMR" id="A6WQ09"/>
<dbReference type="KEGG" id="sbm:Shew185_2764"/>
<dbReference type="HOGENOM" id="CLU_022427_2_1_6"/>
<dbReference type="GO" id="GO:0005737">
    <property type="term" value="C:cytoplasm"/>
    <property type="evidence" value="ECO:0007669"/>
    <property type="project" value="UniProtKB-SubCell"/>
</dbReference>
<dbReference type="GO" id="GO:0050660">
    <property type="term" value="F:flavin adenine dinucleotide binding"/>
    <property type="evidence" value="ECO:0007669"/>
    <property type="project" value="UniProtKB-UniRule"/>
</dbReference>
<dbReference type="GO" id="GO:0016645">
    <property type="term" value="F:oxidoreductase activity, acting on the CH-NH group of donors"/>
    <property type="evidence" value="ECO:0007669"/>
    <property type="project" value="InterPro"/>
</dbReference>
<dbReference type="GO" id="GO:0004808">
    <property type="term" value="F:tRNA (5-methylaminomethyl-2-thiouridylate)(34)-methyltransferase activity"/>
    <property type="evidence" value="ECO:0007669"/>
    <property type="project" value="UniProtKB-EC"/>
</dbReference>
<dbReference type="GO" id="GO:0032259">
    <property type="term" value="P:methylation"/>
    <property type="evidence" value="ECO:0007669"/>
    <property type="project" value="UniProtKB-KW"/>
</dbReference>
<dbReference type="GO" id="GO:0002098">
    <property type="term" value="P:tRNA wobble uridine modification"/>
    <property type="evidence" value="ECO:0007669"/>
    <property type="project" value="TreeGrafter"/>
</dbReference>
<dbReference type="Gene3D" id="3.30.9.10">
    <property type="entry name" value="D-Amino Acid Oxidase, subunit A, domain 2"/>
    <property type="match status" value="1"/>
</dbReference>
<dbReference type="Gene3D" id="3.50.50.60">
    <property type="entry name" value="FAD/NAD(P)-binding domain"/>
    <property type="match status" value="1"/>
</dbReference>
<dbReference type="Gene3D" id="3.40.50.150">
    <property type="entry name" value="Vaccinia Virus protein VP39"/>
    <property type="match status" value="1"/>
</dbReference>
<dbReference type="HAMAP" id="MF_01102">
    <property type="entry name" value="MnmC"/>
    <property type="match status" value="1"/>
</dbReference>
<dbReference type="InterPro" id="IPR006076">
    <property type="entry name" value="FAD-dep_OxRdtase"/>
</dbReference>
<dbReference type="InterPro" id="IPR036188">
    <property type="entry name" value="FAD/NAD-bd_sf"/>
</dbReference>
<dbReference type="InterPro" id="IPR029063">
    <property type="entry name" value="SAM-dependent_MTases_sf"/>
</dbReference>
<dbReference type="InterPro" id="IPR023032">
    <property type="entry name" value="tRNA_MAMT_biosynth_bifunc_MnmC"/>
</dbReference>
<dbReference type="InterPro" id="IPR017610">
    <property type="entry name" value="tRNA_S-uridine_synth_MnmC_C"/>
</dbReference>
<dbReference type="NCBIfam" id="TIGR03197">
    <property type="entry name" value="MnmC_Cterm"/>
    <property type="match status" value="1"/>
</dbReference>
<dbReference type="PANTHER" id="PTHR13847">
    <property type="entry name" value="SARCOSINE DEHYDROGENASE-RELATED"/>
    <property type="match status" value="1"/>
</dbReference>
<dbReference type="PANTHER" id="PTHR13847:SF283">
    <property type="entry name" value="TRNA 5-METHYLAMINOMETHYL-2-THIOURIDINE BIOSYNTHESIS BIFUNCTIONAL PROTEIN MNMC"/>
    <property type="match status" value="1"/>
</dbReference>
<dbReference type="Pfam" id="PF01266">
    <property type="entry name" value="DAO"/>
    <property type="match status" value="1"/>
</dbReference>
<dbReference type="SUPFAM" id="SSF51905">
    <property type="entry name" value="FAD/NAD(P)-binding domain"/>
    <property type="match status" value="1"/>
</dbReference>
<keyword id="KW-0963">Cytoplasm</keyword>
<keyword id="KW-0274">FAD</keyword>
<keyword id="KW-0285">Flavoprotein</keyword>
<keyword id="KW-0489">Methyltransferase</keyword>
<keyword id="KW-0511">Multifunctional enzyme</keyword>
<keyword id="KW-0560">Oxidoreductase</keyword>
<keyword id="KW-0949">S-adenosyl-L-methionine</keyword>
<keyword id="KW-0808">Transferase</keyword>
<keyword id="KW-0819">tRNA processing</keyword>
<protein>
    <recommendedName>
        <fullName evidence="1">tRNA 5-methylaminomethyl-2-thiouridine biosynthesis bifunctional protein MnmC</fullName>
        <shortName evidence="1">tRNA mnm(5)s(2)U biosynthesis bifunctional protein</shortName>
    </recommendedName>
    <domain>
        <recommendedName>
            <fullName evidence="1">tRNA (mnm(5)s(2)U34)-methyltransferase</fullName>
            <ecNumber evidence="1">2.1.1.61</ecNumber>
        </recommendedName>
    </domain>
    <domain>
        <recommendedName>
            <fullName evidence="1">FAD-dependent cmnm(5)s(2)U34 oxidoreductase</fullName>
            <ecNumber evidence="1">1.5.-.-</ecNumber>
        </recommendedName>
    </domain>
</protein>